<keyword id="KW-0963">Cytoplasm</keyword>
<keyword id="KW-0274">FAD</keyword>
<keyword id="KW-0285">Flavoprotein</keyword>
<keyword id="KW-0489">Methyltransferase</keyword>
<keyword id="KW-0511">Multifunctional enzyme</keyword>
<keyword id="KW-0560">Oxidoreductase</keyword>
<keyword id="KW-0949">S-adenosyl-L-methionine</keyword>
<keyword id="KW-0808">Transferase</keyword>
<keyword id="KW-0819">tRNA processing</keyword>
<organism>
    <name type="scientific">Shewanella sp. (strain ANA-3)</name>
    <dbReference type="NCBI Taxonomy" id="94122"/>
    <lineage>
        <taxon>Bacteria</taxon>
        <taxon>Pseudomonadati</taxon>
        <taxon>Pseudomonadota</taxon>
        <taxon>Gammaproteobacteria</taxon>
        <taxon>Alteromonadales</taxon>
        <taxon>Shewanellaceae</taxon>
        <taxon>Shewanella</taxon>
    </lineage>
</organism>
<dbReference type="EC" id="2.1.1.61" evidence="1"/>
<dbReference type="EC" id="1.5.-.-" evidence="1"/>
<dbReference type="EMBL" id="CP000469">
    <property type="protein sequence ID" value="ABK47708.1"/>
    <property type="status" value="ALT_INIT"/>
    <property type="molecule type" value="Genomic_DNA"/>
</dbReference>
<dbReference type="RefSeq" id="WP_041412591.1">
    <property type="nucleotide sequence ID" value="NC_008577.1"/>
</dbReference>
<dbReference type="SMR" id="A0KV89"/>
<dbReference type="STRING" id="94122.Shewana3_1474"/>
<dbReference type="KEGG" id="shn:Shewana3_1474"/>
<dbReference type="eggNOG" id="COG0665">
    <property type="taxonomic scope" value="Bacteria"/>
</dbReference>
<dbReference type="eggNOG" id="COG4121">
    <property type="taxonomic scope" value="Bacteria"/>
</dbReference>
<dbReference type="HOGENOM" id="CLU_022427_2_1_6"/>
<dbReference type="OrthoDB" id="9786494at2"/>
<dbReference type="Proteomes" id="UP000002589">
    <property type="component" value="Chromosome"/>
</dbReference>
<dbReference type="GO" id="GO:0005737">
    <property type="term" value="C:cytoplasm"/>
    <property type="evidence" value="ECO:0007669"/>
    <property type="project" value="UniProtKB-SubCell"/>
</dbReference>
<dbReference type="GO" id="GO:0050660">
    <property type="term" value="F:flavin adenine dinucleotide binding"/>
    <property type="evidence" value="ECO:0007669"/>
    <property type="project" value="UniProtKB-UniRule"/>
</dbReference>
<dbReference type="GO" id="GO:0016645">
    <property type="term" value="F:oxidoreductase activity, acting on the CH-NH group of donors"/>
    <property type="evidence" value="ECO:0007669"/>
    <property type="project" value="InterPro"/>
</dbReference>
<dbReference type="GO" id="GO:0004808">
    <property type="term" value="F:tRNA (5-methylaminomethyl-2-thiouridylate)(34)-methyltransferase activity"/>
    <property type="evidence" value="ECO:0007669"/>
    <property type="project" value="UniProtKB-EC"/>
</dbReference>
<dbReference type="GO" id="GO:0032259">
    <property type="term" value="P:methylation"/>
    <property type="evidence" value="ECO:0007669"/>
    <property type="project" value="UniProtKB-KW"/>
</dbReference>
<dbReference type="GO" id="GO:0002098">
    <property type="term" value="P:tRNA wobble uridine modification"/>
    <property type="evidence" value="ECO:0007669"/>
    <property type="project" value="TreeGrafter"/>
</dbReference>
<dbReference type="Gene3D" id="3.30.9.10">
    <property type="entry name" value="D-Amino Acid Oxidase, subunit A, domain 2"/>
    <property type="match status" value="1"/>
</dbReference>
<dbReference type="Gene3D" id="3.50.50.60">
    <property type="entry name" value="FAD/NAD(P)-binding domain"/>
    <property type="match status" value="1"/>
</dbReference>
<dbReference type="Gene3D" id="3.40.50.150">
    <property type="entry name" value="Vaccinia Virus protein VP39"/>
    <property type="match status" value="1"/>
</dbReference>
<dbReference type="HAMAP" id="MF_01102">
    <property type="entry name" value="MnmC"/>
    <property type="match status" value="1"/>
</dbReference>
<dbReference type="InterPro" id="IPR006076">
    <property type="entry name" value="FAD-dep_OxRdtase"/>
</dbReference>
<dbReference type="InterPro" id="IPR036188">
    <property type="entry name" value="FAD/NAD-bd_sf"/>
</dbReference>
<dbReference type="InterPro" id="IPR029063">
    <property type="entry name" value="SAM-dependent_MTases_sf"/>
</dbReference>
<dbReference type="InterPro" id="IPR023032">
    <property type="entry name" value="tRNA_MAMT_biosynth_bifunc_MnmC"/>
</dbReference>
<dbReference type="InterPro" id="IPR017610">
    <property type="entry name" value="tRNA_S-uridine_synth_MnmC_C"/>
</dbReference>
<dbReference type="NCBIfam" id="TIGR03197">
    <property type="entry name" value="MnmC_Cterm"/>
    <property type="match status" value="1"/>
</dbReference>
<dbReference type="PANTHER" id="PTHR13847">
    <property type="entry name" value="SARCOSINE DEHYDROGENASE-RELATED"/>
    <property type="match status" value="1"/>
</dbReference>
<dbReference type="PANTHER" id="PTHR13847:SF283">
    <property type="entry name" value="TRNA 5-METHYLAMINOMETHYL-2-THIOURIDINE BIOSYNTHESIS BIFUNCTIONAL PROTEIN MNMC"/>
    <property type="match status" value="1"/>
</dbReference>
<dbReference type="Pfam" id="PF01266">
    <property type="entry name" value="DAO"/>
    <property type="match status" value="1"/>
</dbReference>
<dbReference type="SUPFAM" id="SSF51905">
    <property type="entry name" value="FAD/NAD(P)-binding domain"/>
    <property type="match status" value="1"/>
</dbReference>
<sequence>MTAKPHKSCQFKRDYPQLINLYPPCALTTAQSLDNFTRLRRSRLTTPSAQLGQELYVMGQWGLGDGLELLSLLHHWQTQTQSNTRLLVKVFEPNPINDYELKLLWDQSQSLISTPHLQPIANAILKAKPARIIGCQRLIFDDGRITVDLHFGDLHTSLTNLPHSPAHPIQQWLVLPHLASQLSGKLAWQMARLSADDAQLIGVNLAETVQQLAHSSGFSTLNVSQDALNGDASDALPSQIITDEILLHERKLLRQQADTAQAFTPKPATLAAIDHPVAIVGGGLASANLMLSLAERGQSSTLFCKDNELGQGASGNRQGAIYPLLTPENDELSRFFQQAFLFSRRRIEALSQASMMDTNAAPHVTVISHDFCGVLQTGHDERSQQRLDKIIQSQDWPAEIAYAVDANEANEIAQIGIDKAGFFYPLGGWVCPFEYAKAAVDKASQLANVQCHFNTEITEIECDAQAWYLHSQGQRFGPFRQLVLANGAQLTQFSASERLQISPFRGQVSHVPAQFKLSQLATVLCANGYLTPSHQGLHCLGASYVKAAEHFDFCPQEQRENLGKMQESYPNQAWVDDIDISGNSARVGVRMVTRDHFPMMGCAPDVAEILARYELHQLNQQQAEQSKHYWQTTPAPILDGLYILGGLGSRGLSSGPLAAECLAAQLTGEPLPLDWSTLNKLNPNRMWLRKLLKGKAL</sequence>
<protein>
    <recommendedName>
        <fullName evidence="1">tRNA 5-methylaminomethyl-2-thiouridine biosynthesis bifunctional protein MnmC</fullName>
        <shortName evidence="1">tRNA mnm(5)s(2)U biosynthesis bifunctional protein</shortName>
    </recommendedName>
    <domain>
        <recommendedName>
            <fullName evidence="1">tRNA (mnm(5)s(2)U34)-methyltransferase</fullName>
            <ecNumber evidence="1">2.1.1.61</ecNumber>
        </recommendedName>
    </domain>
    <domain>
        <recommendedName>
            <fullName evidence="1">FAD-dependent cmnm(5)s(2)U34 oxidoreductase</fullName>
            <ecNumber evidence="1">1.5.-.-</ecNumber>
        </recommendedName>
    </domain>
</protein>
<proteinExistence type="inferred from homology"/>
<accession>A0KV89</accession>
<comment type="function">
    <text evidence="1">Catalyzes the last two steps in the biosynthesis of 5-methylaminomethyl-2-thiouridine (mnm(5)s(2)U) at the wobble position (U34) in tRNA. Catalyzes the FAD-dependent demodification of cmnm(5)s(2)U34 to nm(5)s(2)U34, followed by the transfer of a methyl group from S-adenosyl-L-methionine to nm(5)s(2)U34, to form mnm(5)s(2)U34.</text>
</comment>
<comment type="catalytic activity">
    <reaction evidence="1">
        <text>5-aminomethyl-2-thiouridine(34) in tRNA + S-adenosyl-L-methionine = 5-methylaminomethyl-2-thiouridine(34) in tRNA + S-adenosyl-L-homocysteine + H(+)</text>
        <dbReference type="Rhea" id="RHEA:19569"/>
        <dbReference type="Rhea" id="RHEA-COMP:10195"/>
        <dbReference type="Rhea" id="RHEA-COMP:10197"/>
        <dbReference type="ChEBI" id="CHEBI:15378"/>
        <dbReference type="ChEBI" id="CHEBI:57856"/>
        <dbReference type="ChEBI" id="CHEBI:59789"/>
        <dbReference type="ChEBI" id="CHEBI:74454"/>
        <dbReference type="ChEBI" id="CHEBI:74455"/>
        <dbReference type="EC" id="2.1.1.61"/>
    </reaction>
</comment>
<comment type="cofactor">
    <cofactor evidence="1">
        <name>FAD</name>
        <dbReference type="ChEBI" id="CHEBI:57692"/>
    </cofactor>
</comment>
<comment type="subcellular location">
    <subcellularLocation>
        <location evidence="1">Cytoplasm</location>
    </subcellularLocation>
</comment>
<comment type="similarity">
    <text evidence="1">In the N-terminal section; belongs to the methyltransferase superfamily. tRNA (mnm(5)s(2)U34)-methyltransferase family.</text>
</comment>
<comment type="similarity">
    <text evidence="1">In the C-terminal section; belongs to the DAO family.</text>
</comment>
<comment type="sequence caution" evidence="2">
    <conflict type="erroneous initiation">
        <sequence resource="EMBL-CDS" id="ABK47708"/>
    </conflict>
</comment>
<reference key="1">
    <citation type="submission" date="2006-09" db="EMBL/GenBank/DDBJ databases">
        <title>Complete sequence of chromosome 1 of Shewanella sp. ANA-3.</title>
        <authorList>
            <person name="Copeland A."/>
            <person name="Lucas S."/>
            <person name="Lapidus A."/>
            <person name="Barry K."/>
            <person name="Detter J.C."/>
            <person name="Glavina del Rio T."/>
            <person name="Hammon N."/>
            <person name="Israni S."/>
            <person name="Dalin E."/>
            <person name="Tice H."/>
            <person name="Pitluck S."/>
            <person name="Chertkov O."/>
            <person name="Brettin T."/>
            <person name="Bruce D."/>
            <person name="Han C."/>
            <person name="Tapia R."/>
            <person name="Gilna P."/>
            <person name="Schmutz J."/>
            <person name="Larimer F."/>
            <person name="Land M."/>
            <person name="Hauser L."/>
            <person name="Kyrpides N."/>
            <person name="Kim E."/>
            <person name="Newman D."/>
            <person name="Salticov C."/>
            <person name="Konstantinidis K."/>
            <person name="Klappenback J."/>
            <person name="Tiedje J."/>
            <person name="Richardson P."/>
        </authorList>
    </citation>
    <scope>NUCLEOTIDE SEQUENCE [LARGE SCALE GENOMIC DNA]</scope>
    <source>
        <strain>ANA-3</strain>
    </source>
</reference>
<evidence type="ECO:0000255" key="1">
    <source>
        <dbReference type="HAMAP-Rule" id="MF_01102"/>
    </source>
</evidence>
<evidence type="ECO:0000305" key="2"/>
<feature type="chain" id="PRO_0000348034" description="tRNA 5-methylaminomethyl-2-thiouridine biosynthesis bifunctional protein MnmC">
    <location>
        <begin position="1"/>
        <end position="697"/>
    </location>
</feature>
<feature type="region of interest" description="tRNA (mnm(5)s(2)U34)-methyltransferase">
    <location>
        <begin position="1"/>
        <end position="275"/>
    </location>
</feature>
<feature type="region of interest" description="FAD-dependent cmnm(5)s(2)U34 oxidoreductase">
    <location>
        <begin position="280"/>
        <end position="697"/>
    </location>
</feature>
<name>MNMC_SHESA</name>
<gene>
    <name evidence="1" type="primary">mnmC</name>
    <name type="ordered locus">Shewana3_1474</name>
</gene>